<dbReference type="EMBL" id="AY702092">
    <property type="protein sequence ID" value="AAU14143.1"/>
    <property type="molecule type" value="mRNA"/>
</dbReference>
<dbReference type="SMR" id="Q64G17"/>
<dbReference type="FunCoup" id="Q64G17">
    <property type="interactions" value="7"/>
</dbReference>
<dbReference type="iPTMnet" id="Q64G17"/>
<dbReference type="PhosphoSitePlus" id="Q64G17"/>
<dbReference type="jPOST" id="Q64G17"/>
<dbReference type="PeptideAtlas" id="Q64G17"/>
<dbReference type="ProteomicsDB" id="296034"/>
<dbReference type="AGR" id="MGI:3525200"/>
<dbReference type="MGI" id="MGI:3525200">
    <property type="gene designation" value="Anp32-ps"/>
</dbReference>
<dbReference type="InParanoid" id="Q64G17"/>
<dbReference type="Proteomes" id="UP000000589">
    <property type="component" value="Unplaced"/>
</dbReference>
<dbReference type="RNAct" id="Q64G17">
    <property type="molecule type" value="protein"/>
</dbReference>
<dbReference type="Gene3D" id="3.80.10.10">
    <property type="entry name" value="Ribonuclease Inhibitor"/>
    <property type="match status" value="1"/>
</dbReference>
<dbReference type="InterPro" id="IPR045081">
    <property type="entry name" value="AN32"/>
</dbReference>
<dbReference type="InterPro" id="IPR001611">
    <property type="entry name" value="Leu-rich_rpt"/>
</dbReference>
<dbReference type="InterPro" id="IPR025875">
    <property type="entry name" value="Leu-rich_rpt_4"/>
</dbReference>
<dbReference type="InterPro" id="IPR032675">
    <property type="entry name" value="LRR_dom_sf"/>
</dbReference>
<dbReference type="PANTHER" id="PTHR11375">
    <property type="entry name" value="ACIDIC LEUCINE-RICH NUCLEAR PHOSPHOPROTEIN 32"/>
    <property type="match status" value="1"/>
</dbReference>
<dbReference type="PANTHER" id="PTHR11375:SF1">
    <property type="entry name" value="ACIDIC LEUCINE-RICH NUCLEAR PHOSPHOPROTEIN 32 FAMILY MEMBER A"/>
    <property type="match status" value="1"/>
</dbReference>
<dbReference type="Pfam" id="PF12799">
    <property type="entry name" value="LRR_4"/>
    <property type="match status" value="1"/>
</dbReference>
<dbReference type="SUPFAM" id="SSF52058">
    <property type="entry name" value="L domain-like"/>
    <property type="match status" value="1"/>
</dbReference>
<dbReference type="PROSITE" id="PS51450">
    <property type="entry name" value="LRR"/>
    <property type="match status" value="3"/>
</dbReference>
<protein>
    <recommendedName>
        <fullName>Putative acidic leucine-rich nuclear phosphoprotein 32 family member C</fullName>
    </recommendedName>
</protein>
<reference key="1">
    <citation type="journal article" date="2004" name="Genome Res.">
        <title>The status, quality, and expansion of the NIH full-length cDNA project: the Mammalian Gene Collection (MGC).</title>
        <authorList>
            <consortium name="The MGC Project Team"/>
        </authorList>
    </citation>
    <scope>NUCLEOTIDE SEQUENCE [LARGE SCALE MRNA]</scope>
</reference>
<reference key="2">
    <citation type="journal article" date="2005" name="Cerebellum">
        <title>The Anp32 family of proteins containing leucine-rich repeats.</title>
        <authorList>
            <person name="Matilla A."/>
            <person name="Radrizzani M."/>
        </authorList>
    </citation>
    <scope>NUCLEOTIDE SEQUENCE [MRNA]</scope>
    <scope>GENE FAMILY</scope>
    <scope>NOMENCLATURE</scope>
</reference>
<sequence length="123" mass="14066">MEMDKQIYLELWNRTPSDVKELVLDSCKSIEGKIEGLTDEFEELEFLSTINVGLTFISNLPKLNKLKKLELSENRISGDLEVLAEKCPNLKHLNLSGNKIKDLSTIELLKKLENLKSLDLFNC</sequence>
<name>AN32C_MOUSE</name>
<evidence type="ECO:0000305" key="1"/>
<feature type="chain" id="PRO_0000240191" description="Putative acidic leucine-rich nuclear phosphoprotein 32 family member C">
    <location>
        <begin position="1"/>
        <end position="123"/>
    </location>
</feature>
<feature type="repeat" description="LRR 1">
    <location>
        <begin position="43"/>
        <end position="64"/>
    </location>
</feature>
<feature type="repeat" description="LRR 2">
    <location>
        <begin position="65"/>
        <end position="87"/>
    </location>
</feature>
<feature type="repeat" description="LRR 3">
    <location>
        <begin position="89"/>
        <end position="110"/>
    </location>
</feature>
<feature type="repeat" description="LRR 4">
    <location>
        <begin position="114"/>
        <end position="123"/>
    </location>
</feature>
<keyword id="KW-0433">Leucine-rich repeat</keyword>
<keyword id="KW-1185">Reference proteome</keyword>
<keyword id="KW-0677">Repeat</keyword>
<comment type="similarity">
    <text evidence="1">Belongs to the ANP32 family.</text>
</comment>
<comment type="caution">
    <text evidence="1">Defined as a pseudogene by MGI. However, proteomics data suggest the existence of the protein.</text>
</comment>
<proteinExistence type="evidence at transcript level"/>
<accession>Q64G17</accession>
<gene>
    <name type="primary">Anp32c</name>
    <name type="synonym">Anp32-ps</name>
</gene>
<organism>
    <name type="scientific">Mus musculus</name>
    <name type="common">Mouse</name>
    <dbReference type="NCBI Taxonomy" id="10090"/>
    <lineage>
        <taxon>Eukaryota</taxon>
        <taxon>Metazoa</taxon>
        <taxon>Chordata</taxon>
        <taxon>Craniata</taxon>
        <taxon>Vertebrata</taxon>
        <taxon>Euteleostomi</taxon>
        <taxon>Mammalia</taxon>
        <taxon>Eutheria</taxon>
        <taxon>Euarchontoglires</taxon>
        <taxon>Glires</taxon>
        <taxon>Rodentia</taxon>
        <taxon>Myomorpha</taxon>
        <taxon>Muroidea</taxon>
        <taxon>Muridae</taxon>
        <taxon>Murinae</taxon>
        <taxon>Mus</taxon>
        <taxon>Mus</taxon>
    </lineage>
</organism>